<protein>
    <recommendedName>
        <fullName evidence="1">Potassium/proton antiporter CemA</fullName>
    </recommendedName>
    <alternativeName>
        <fullName evidence="1">Chloroplast envelope membrane protein A</fullName>
        <shortName evidence="1">CemA</shortName>
    </alternativeName>
</protein>
<reference key="1">
    <citation type="journal article" date="2008" name="BMC Evol. Biol.">
        <title>The complete plastid genome sequence of Welwitschia mirabilis: an unusually compact plastome with accelerated divergence rates.</title>
        <authorList>
            <person name="McCoy S.R."/>
            <person name="Kuehl J.V."/>
            <person name="Boore J.L."/>
            <person name="Raubeson L.A."/>
        </authorList>
    </citation>
    <scope>NUCLEOTIDE SEQUENCE [LARGE SCALE GENOMIC DNA]</scope>
</reference>
<reference key="2">
    <citation type="journal article" date="2009" name="Mol. Phylogenet. Evol.">
        <title>Evolution of reduced and compact chloroplast genomes (cpDNAs) in gnetophytes: Selection toward a lower-cost strategy.</title>
        <authorList>
            <person name="Wu C.-S."/>
            <person name="Lai Y.-T."/>
            <person name="Lin C.-P."/>
            <person name="Wang Y.-N."/>
            <person name="Chaw S.-M."/>
        </authorList>
    </citation>
    <scope>NUCLEOTIDE SEQUENCE [LARGE SCALE GENOMIC DNA]</scope>
</reference>
<evidence type="ECO:0000255" key="1">
    <source>
        <dbReference type="HAMAP-Rule" id="MF_01308"/>
    </source>
</evidence>
<evidence type="ECO:0000305" key="2"/>
<geneLocation type="chloroplast"/>
<feature type="chain" id="PRO_1000165469" description="Potassium/proton antiporter CemA">
    <location>
        <begin position="1"/>
        <end position="259"/>
    </location>
</feature>
<feature type="transmembrane region" description="Helical" evidence="1">
    <location>
        <begin position="47"/>
        <end position="67"/>
    </location>
</feature>
<feature type="transmembrane region" description="Helical" evidence="1">
    <location>
        <begin position="136"/>
        <end position="156"/>
    </location>
</feature>
<feature type="transmembrane region" description="Helical" evidence="1">
    <location>
        <begin position="184"/>
        <end position="204"/>
    </location>
</feature>
<feature type="transmembrane region" description="Helical" evidence="1">
    <location>
        <begin position="219"/>
        <end position="239"/>
    </location>
</feature>
<dbReference type="EMBL" id="EU342371">
    <property type="protein sequence ID" value="ABY26801.1"/>
    <property type="molecule type" value="Genomic_DNA"/>
</dbReference>
<dbReference type="EMBL" id="AP009568">
    <property type="protein sequence ID" value="BAH11217.1"/>
    <property type="molecule type" value="Genomic_DNA"/>
</dbReference>
<dbReference type="RefSeq" id="YP_001876588.1">
    <property type="nucleotide sequence ID" value="NC_010654.1"/>
</dbReference>
<dbReference type="GeneID" id="6276227"/>
<dbReference type="GO" id="GO:0009706">
    <property type="term" value="C:chloroplast inner membrane"/>
    <property type="evidence" value="ECO:0007669"/>
    <property type="project" value="UniProtKB-SubCell"/>
</dbReference>
<dbReference type="GO" id="GO:0015297">
    <property type="term" value="F:antiporter activity"/>
    <property type="evidence" value="ECO:0007669"/>
    <property type="project" value="UniProtKB-KW"/>
</dbReference>
<dbReference type="GO" id="GO:0015078">
    <property type="term" value="F:proton transmembrane transporter activity"/>
    <property type="evidence" value="ECO:0007669"/>
    <property type="project" value="UniProtKB-UniRule"/>
</dbReference>
<dbReference type="GO" id="GO:0006813">
    <property type="term" value="P:potassium ion transport"/>
    <property type="evidence" value="ECO:0007669"/>
    <property type="project" value="UniProtKB-UniRule"/>
</dbReference>
<dbReference type="HAMAP" id="MF_01308">
    <property type="entry name" value="CemA_PxcA"/>
    <property type="match status" value="1"/>
</dbReference>
<dbReference type="InterPro" id="IPR004282">
    <property type="entry name" value="CemA"/>
</dbReference>
<dbReference type="PANTHER" id="PTHR33650:SF2">
    <property type="entry name" value="CHLOROPLAST ENVELOPE MEMBRANE PROTEIN"/>
    <property type="match status" value="1"/>
</dbReference>
<dbReference type="PANTHER" id="PTHR33650">
    <property type="entry name" value="CHLOROPLAST ENVELOPE MEMBRANE PROTEIN-RELATED"/>
    <property type="match status" value="1"/>
</dbReference>
<dbReference type="Pfam" id="PF03040">
    <property type="entry name" value="CemA"/>
    <property type="match status" value="1"/>
</dbReference>
<keyword id="KW-0050">Antiport</keyword>
<keyword id="KW-0150">Chloroplast</keyword>
<keyword id="KW-0375">Hydrogen ion transport</keyword>
<keyword id="KW-0406">Ion transport</keyword>
<keyword id="KW-0472">Membrane</keyword>
<keyword id="KW-0934">Plastid</keyword>
<keyword id="KW-1001">Plastid inner membrane</keyword>
<keyword id="KW-0630">Potassium</keyword>
<keyword id="KW-0633">Potassium transport</keyword>
<keyword id="KW-0812">Transmembrane</keyword>
<keyword id="KW-1133">Transmembrane helix</keyword>
<keyword id="KW-0813">Transport</keyword>
<accession>B2Y1X1</accession>
<gene>
    <name evidence="1" type="primary">cemA</name>
</gene>
<organism>
    <name type="scientific">Welwitschia mirabilis</name>
    <name type="common">Tree tumbo</name>
    <name type="synonym">Welwitschia bainesii</name>
    <dbReference type="NCBI Taxonomy" id="3377"/>
    <lineage>
        <taxon>Eukaryota</taxon>
        <taxon>Viridiplantae</taxon>
        <taxon>Streptophyta</taxon>
        <taxon>Embryophyta</taxon>
        <taxon>Tracheophyta</taxon>
        <taxon>Spermatophyta</taxon>
        <taxon>Gnetopsida</taxon>
        <taxon>Gnetidae</taxon>
        <taxon>Welwitschiales</taxon>
        <taxon>Welwitschiaceae</taxon>
        <taxon>Welwitschia</taxon>
    </lineage>
</organism>
<comment type="function">
    <text evidence="1">Contributes to K(+)/H(+) antiport activity by supporting proton efflux to control proton extrusion and homeostasis in chloroplasts in a light-dependent manner to modulate photosynthesis. Prevents excessive induction of non-photochemical quenching (NPQ) under continuous-light conditions. Indirectly promotes efficient inorganic carbon uptake into chloroplasts.</text>
</comment>
<comment type="catalytic activity">
    <reaction evidence="1">
        <text>K(+)(in) + H(+)(out) = K(+)(out) + H(+)(in)</text>
        <dbReference type="Rhea" id="RHEA:29467"/>
        <dbReference type="ChEBI" id="CHEBI:15378"/>
        <dbReference type="ChEBI" id="CHEBI:29103"/>
    </reaction>
</comment>
<comment type="subcellular location">
    <subcellularLocation>
        <location evidence="1">Plastid</location>
        <location evidence="1">Chloroplast inner membrane</location>
        <topology evidence="1">Multi-pass membrane protein</topology>
    </subcellularLocation>
</comment>
<comment type="similarity">
    <text evidence="1 2">Belongs to the CemA family.</text>
</comment>
<proteinExistence type="inferred from homology"/>
<name>CEMA_WELMI</name>
<sequence length="259" mass="30522">MGLIPHSIIRTLSRLRTEFMSKSGPLVFYEMEVAKKRASASLRYLTCLLVLPWVISILLQKSIEPWVTFWWNTSSFDILDFLEEENTLVIFGQIEELLLFERMIENYSETYSKPSSKEIKKKTNVIKLYKKDCIHIITHLFTNFIGFALLSTYLVMGQKKLAIFFSWIREFFYSMSDTMKAFSILLATDLCIGFHSPHGWELLIDWISENYGFVHNDRIISSLVSTFPVILDTIFKYWIFRRFNRISPSLVVIYHSMNE</sequence>